<name>LACD2_STRA3</name>
<protein>
    <recommendedName>
        <fullName>Tagatose 1,6-diphosphate aldolase 2</fullName>
        <ecNumber>4.1.2.40</ecNumber>
    </recommendedName>
    <alternativeName>
        <fullName>D-tagatose-1,6-bisphosphate aldolase 2</fullName>
    </alternativeName>
    <alternativeName>
        <fullName>Tagatose-bisphosphate aldolase 2</fullName>
    </alternativeName>
</protein>
<organism>
    <name type="scientific">Streptococcus agalactiae serotype III (strain NEM316)</name>
    <dbReference type="NCBI Taxonomy" id="211110"/>
    <lineage>
        <taxon>Bacteria</taxon>
        <taxon>Bacillati</taxon>
        <taxon>Bacillota</taxon>
        <taxon>Bacilli</taxon>
        <taxon>Lactobacillales</taxon>
        <taxon>Streptococcaceae</taxon>
        <taxon>Streptococcus</taxon>
    </lineage>
</organism>
<gene>
    <name type="primary">lacD2</name>
    <name type="ordered locus">gbs1333</name>
</gene>
<dbReference type="EC" id="4.1.2.40"/>
<dbReference type="EMBL" id="AL766850">
    <property type="protein sequence ID" value="CAD46992.1"/>
    <property type="molecule type" value="Genomic_DNA"/>
</dbReference>
<dbReference type="SMR" id="Q8E4R8"/>
<dbReference type="KEGG" id="san:gbs1333"/>
<dbReference type="eggNOG" id="COG3684">
    <property type="taxonomic scope" value="Bacteria"/>
</dbReference>
<dbReference type="HOGENOM" id="CLU_058971_0_1_9"/>
<dbReference type="UniPathway" id="UPA00704">
    <property type="reaction ID" value="UER00716"/>
</dbReference>
<dbReference type="Proteomes" id="UP000000823">
    <property type="component" value="Chromosome"/>
</dbReference>
<dbReference type="GO" id="GO:0061595">
    <property type="term" value="F:6-deoxy-6-sulfofructose-1-phosphate aldolase activity"/>
    <property type="evidence" value="ECO:0007669"/>
    <property type="project" value="TreeGrafter"/>
</dbReference>
<dbReference type="GO" id="GO:0009024">
    <property type="term" value="F:tagatose-6-phosphate kinase activity"/>
    <property type="evidence" value="ECO:0007669"/>
    <property type="project" value="InterPro"/>
</dbReference>
<dbReference type="GO" id="GO:0009025">
    <property type="term" value="F:tagatose-bisphosphate aldolase activity"/>
    <property type="evidence" value="ECO:0007669"/>
    <property type="project" value="UniProtKB-UniRule"/>
</dbReference>
<dbReference type="GO" id="GO:1902777">
    <property type="term" value="P:6-sulfoquinovose(1-) catabolic process"/>
    <property type="evidence" value="ECO:0007669"/>
    <property type="project" value="TreeGrafter"/>
</dbReference>
<dbReference type="GO" id="GO:2001059">
    <property type="term" value="P:D-tagatose 6-phosphate catabolic process"/>
    <property type="evidence" value="ECO:0007669"/>
    <property type="project" value="UniProtKB-UniRule"/>
</dbReference>
<dbReference type="GO" id="GO:0019512">
    <property type="term" value="P:lactose catabolic process via tagatose-6-phosphate"/>
    <property type="evidence" value="ECO:0007669"/>
    <property type="project" value="InterPro"/>
</dbReference>
<dbReference type="FunFam" id="3.20.20.70:FF:000137">
    <property type="entry name" value="Tagatose 1,6-diphosphate aldolase 2"/>
    <property type="match status" value="1"/>
</dbReference>
<dbReference type="Gene3D" id="3.20.20.70">
    <property type="entry name" value="Aldolase class I"/>
    <property type="match status" value="1"/>
</dbReference>
<dbReference type="HAMAP" id="MF_00734">
    <property type="entry name" value="LacD"/>
    <property type="match status" value="1"/>
</dbReference>
<dbReference type="InterPro" id="IPR013785">
    <property type="entry name" value="Aldolase_TIM"/>
</dbReference>
<dbReference type="InterPro" id="IPR002915">
    <property type="entry name" value="DeoC/FbaB/LacD_aldolase"/>
</dbReference>
<dbReference type="InterPro" id="IPR050552">
    <property type="entry name" value="LacD_aldolase"/>
</dbReference>
<dbReference type="InterPro" id="IPR005927">
    <property type="entry name" value="Tag_1.6-dipho_adolase"/>
</dbReference>
<dbReference type="NCBIfam" id="TIGR01232">
    <property type="entry name" value="lacD"/>
    <property type="match status" value="1"/>
</dbReference>
<dbReference type="NCBIfam" id="NF003180">
    <property type="entry name" value="PRK04161.1"/>
    <property type="match status" value="1"/>
</dbReference>
<dbReference type="NCBIfam" id="NF009065">
    <property type="entry name" value="PRK12399.1"/>
    <property type="match status" value="1"/>
</dbReference>
<dbReference type="NCBIfam" id="NF009498">
    <property type="entry name" value="PRK12858.1"/>
    <property type="match status" value="1"/>
</dbReference>
<dbReference type="PANTHER" id="PTHR39340">
    <property type="entry name" value="SULFOFRUCTOSEPHOSPHATE ALDOLASE"/>
    <property type="match status" value="1"/>
</dbReference>
<dbReference type="PANTHER" id="PTHR39340:SF1">
    <property type="entry name" value="SULFOFRUCTOSEPHOSPHATE ALDOLASE"/>
    <property type="match status" value="1"/>
</dbReference>
<dbReference type="Pfam" id="PF01791">
    <property type="entry name" value="DeoC"/>
    <property type="match status" value="1"/>
</dbReference>
<dbReference type="SMART" id="SM01133">
    <property type="entry name" value="DeoC"/>
    <property type="match status" value="1"/>
</dbReference>
<dbReference type="SUPFAM" id="SSF51569">
    <property type="entry name" value="Aldolase"/>
    <property type="match status" value="1"/>
</dbReference>
<proteinExistence type="inferred from homology"/>
<comment type="catalytic activity">
    <reaction>
        <text>D-tagatofuranose 1,6-bisphosphate = D-glyceraldehyde 3-phosphate + dihydroxyacetone phosphate</text>
        <dbReference type="Rhea" id="RHEA:22948"/>
        <dbReference type="ChEBI" id="CHEBI:57642"/>
        <dbReference type="ChEBI" id="CHEBI:58694"/>
        <dbReference type="ChEBI" id="CHEBI:59776"/>
        <dbReference type="EC" id="4.1.2.40"/>
    </reaction>
</comment>
<comment type="pathway">
    <text>Carbohydrate metabolism; D-tagatose 6-phosphate degradation; D-glyceraldehyde 3-phosphate and glycerone phosphate from D-tagatose 6-phosphate: step 2/2.</text>
</comment>
<comment type="similarity">
    <text evidence="1">Belongs to the aldolase LacD family.</text>
</comment>
<keyword id="KW-0423">Lactose metabolism</keyword>
<keyword id="KW-0456">Lyase</keyword>
<accession>Q8E4R8</accession>
<reference key="1">
    <citation type="journal article" date="2002" name="Mol. Microbiol.">
        <title>Genome sequence of Streptococcus agalactiae, a pathogen causing invasive neonatal disease.</title>
        <authorList>
            <person name="Glaser P."/>
            <person name="Rusniok C."/>
            <person name="Buchrieser C."/>
            <person name="Chevalier F."/>
            <person name="Frangeul L."/>
            <person name="Msadek T."/>
            <person name="Zouine M."/>
            <person name="Couve E."/>
            <person name="Lalioui L."/>
            <person name="Poyart C."/>
            <person name="Trieu-Cuot P."/>
            <person name="Kunst F."/>
        </authorList>
    </citation>
    <scope>NUCLEOTIDE SEQUENCE [LARGE SCALE GENOMIC DNA]</scope>
    <source>
        <strain>NEM316</strain>
    </source>
</reference>
<sequence length="326" mass="36642">MVLTEQKRKYMEKLSDENGIISALAFDQRGALKRLMAQYQEAEPTVEQMEDLKVLVAEELTPYASSMLLDPEYGLPATKALDKNAGLLLAYEKTGYDTSSTKRLPDCLDVWSAKRIKEQGSDAVKFLLYYDVDSSDELNQQKQAYIERVGSECVAEDIPFFLEILAYDEKIADAGSAEYAKVKPRKVIEAMKVFSDSRFNIDVLKVEVPVNVKYVEGFGDGEVIHTRGEAAAFFKQQDEATNLPYIYLSAGVAAKLFQETLIFAHESGANFNGVLCGRATWAGSVKEYIEQGEEAARQWLRTTGYQNIEELNQVLKQTATSWKERV</sequence>
<feature type="chain" id="PRO_0000203956" description="Tagatose 1,6-diphosphate aldolase 2">
    <location>
        <begin position="1"/>
        <end position="326"/>
    </location>
</feature>
<evidence type="ECO:0000305" key="1"/>